<sequence>MDDATPAEVIEVLKRTGMTGEVMQVKCRILDGRDKGRILTRNVMGPIREGDILMLLDTIREAKEIRTP</sequence>
<protein>
    <recommendedName>
        <fullName evidence="1">Small ribosomal subunit protein eS28</fullName>
    </recommendedName>
    <alternativeName>
        <fullName>30S ribosomal protein S28e</fullName>
    </alternativeName>
</protein>
<dbReference type="EMBL" id="AE000666">
    <property type="protein sequence ID" value="AAB84762.1"/>
    <property type="molecule type" value="Genomic_DNA"/>
</dbReference>
<dbReference type="PIR" id="B69132">
    <property type="entry name" value="B69132"/>
</dbReference>
<dbReference type="RefSeq" id="WP_010875895.1">
    <property type="nucleotide sequence ID" value="NC_000916.1"/>
</dbReference>
<dbReference type="PDB" id="1NE3">
    <property type="method" value="NMR"/>
    <property type="chains" value="A=1-68"/>
</dbReference>
<dbReference type="PDBsum" id="1NE3"/>
<dbReference type="BMRB" id="O26356"/>
<dbReference type="SMR" id="O26356"/>
<dbReference type="FunCoup" id="O26356">
    <property type="interactions" value="136"/>
</dbReference>
<dbReference type="STRING" id="187420.MTH_256"/>
<dbReference type="PaxDb" id="187420-MTH_256"/>
<dbReference type="DNASU" id="1470217"/>
<dbReference type="EnsemblBacteria" id="AAB84762">
    <property type="protein sequence ID" value="AAB84762"/>
    <property type="gene ID" value="MTH_256"/>
</dbReference>
<dbReference type="KEGG" id="mth:MTH_256"/>
<dbReference type="PATRIC" id="fig|187420.15.peg.225"/>
<dbReference type="HOGENOM" id="CLU_178987_2_1_2"/>
<dbReference type="InParanoid" id="O26356"/>
<dbReference type="EvolutionaryTrace" id="O26356"/>
<dbReference type="Proteomes" id="UP000005223">
    <property type="component" value="Chromosome"/>
</dbReference>
<dbReference type="GO" id="GO:0022627">
    <property type="term" value="C:cytosolic small ribosomal subunit"/>
    <property type="evidence" value="ECO:0007669"/>
    <property type="project" value="TreeGrafter"/>
</dbReference>
<dbReference type="GO" id="GO:0003735">
    <property type="term" value="F:structural constituent of ribosome"/>
    <property type="evidence" value="ECO:0007669"/>
    <property type="project" value="InterPro"/>
</dbReference>
<dbReference type="GO" id="GO:0030490">
    <property type="term" value="P:maturation of SSU-rRNA"/>
    <property type="evidence" value="ECO:0007669"/>
    <property type="project" value="TreeGrafter"/>
</dbReference>
<dbReference type="GO" id="GO:0000028">
    <property type="term" value="P:ribosomal small subunit assembly"/>
    <property type="evidence" value="ECO:0007669"/>
    <property type="project" value="TreeGrafter"/>
</dbReference>
<dbReference type="GO" id="GO:0006412">
    <property type="term" value="P:translation"/>
    <property type="evidence" value="ECO:0007669"/>
    <property type="project" value="UniProtKB-UniRule"/>
</dbReference>
<dbReference type="CDD" id="cd04457">
    <property type="entry name" value="S1_S28E"/>
    <property type="match status" value="1"/>
</dbReference>
<dbReference type="FunFam" id="2.40.50.140:FF:000145">
    <property type="entry name" value="30S ribosomal protein S28e"/>
    <property type="match status" value="1"/>
</dbReference>
<dbReference type="Gene3D" id="2.40.50.140">
    <property type="entry name" value="Nucleic acid-binding proteins"/>
    <property type="match status" value="1"/>
</dbReference>
<dbReference type="HAMAP" id="MF_00292">
    <property type="entry name" value="Ribosomal_eS28"/>
    <property type="match status" value="1"/>
</dbReference>
<dbReference type="InterPro" id="IPR012340">
    <property type="entry name" value="NA-bd_OB-fold"/>
</dbReference>
<dbReference type="InterPro" id="IPR000289">
    <property type="entry name" value="Ribosomal_eS28"/>
</dbReference>
<dbReference type="NCBIfam" id="NF003080">
    <property type="entry name" value="PRK04007.1"/>
    <property type="match status" value="1"/>
</dbReference>
<dbReference type="PANTHER" id="PTHR10769">
    <property type="entry name" value="40S RIBOSOMAL PROTEIN S28"/>
    <property type="match status" value="1"/>
</dbReference>
<dbReference type="PANTHER" id="PTHR10769:SF3">
    <property type="entry name" value="SMALL RIBOSOMAL SUBUNIT PROTEIN ES28"/>
    <property type="match status" value="1"/>
</dbReference>
<dbReference type="Pfam" id="PF01200">
    <property type="entry name" value="Ribosomal_S28e"/>
    <property type="match status" value="1"/>
</dbReference>
<dbReference type="SUPFAM" id="SSF50249">
    <property type="entry name" value="Nucleic acid-binding proteins"/>
    <property type="match status" value="1"/>
</dbReference>
<evidence type="ECO:0000305" key="1"/>
<evidence type="ECO:0007829" key="2">
    <source>
        <dbReference type="PDB" id="1NE3"/>
    </source>
</evidence>
<gene>
    <name type="primary">rps28e</name>
    <name type="ordered locus">MTH_256</name>
</gene>
<comment type="similarity">
    <text evidence="1">Belongs to the eukaryotic ribosomal protein eS28 family.</text>
</comment>
<accession>O26356</accession>
<reference key="1">
    <citation type="journal article" date="1997" name="J. Bacteriol.">
        <title>Complete genome sequence of Methanobacterium thermoautotrophicum deltaH: functional analysis and comparative genomics.</title>
        <authorList>
            <person name="Smith D.R."/>
            <person name="Doucette-Stamm L.A."/>
            <person name="Deloughery C."/>
            <person name="Lee H.-M."/>
            <person name="Dubois J."/>
            <person name="Aldredge T."/>
            <person name="Bashirzadeh R."/>
            <person name="Blakely D."/>
            <person name="Cook R."/>
            <person name="Gilbert K."/>
            <person name="Harrison D."/>
            <person name="Hoang L."/>
            <person name="Keagle P."/>
            <person name="Lumm W."/>
            <person name="Pothier B."/>
            <person name="Qiu D."/>
            <person name="Spadafora R."/>
            <person name="Vicare R."/>
            <person name="Wang Y."/>
            <person name="Wierzbowski J."/>
            <person name="Gibson R."/>
            <person name="Jiwani N."/>
            <person name="Caruso A."/>
            <person name="Bush D."/>
            <person name="Safer H."/>
            <person name="Patwell D."/>
            <person name="Prabhakar S."/>
            <person name="McDougall S."/>
            <person name="Shimer G."/>
            <person name="Goyal A."/>
            <person name="Pietrovski S."/>
            <person name="Church G.M."/>
            <person name="Daniels C.J."/>
            <person name="Mao J.-I."/>
            <person name="Rice P."/>
            <person name="Noelling J."/>
            <person name="Reeve J.N."/>
        </authorList>
    </citation>
    <scope>NUCLEOTIDE SEQUENCE [LARGE SCALE GENOMIC DNA]</scope>
    <source>
        <strain>ATCC 29096 / DSM 1053 / JCM 10044 / NBRC 100330 / Delta H</strain>
    </source>
</reference>
<organism>
    <name type="scientific">Methanothermobacter thermautotrophicus (strain ATCC 29096 / DSM 1053 / JCM 10044 / NBRC 100330 / Delta H)</name>
    <name type="common">Methanobacterium thermoautotrophicum</name>
    <dbReference type="NCBI Taxonomy" id="187420"/>
    <lineage>
        <taxon>Archaea</taxon>
        <taxon>Methanobacteriati</taxon>
        <taxon>Methanobacteriota</taxon>
        <taxon>Methanomada group</taxon>
        <taxon>Methanobacteria</taxon>
        <taxon>Methanobacteriales</taxon>
        <taxon>Methanobacteriaceae</taxon>
        <taxon>Methanothermobacter</taxon>
    </lineage>
</organism>
<name>RS28_METTH</name>
<feature type="chain" id="PRO_0000136852" description="Small ribosomal subunit protein eS28">
    <location>
        <begin position="1"/>
        <end position="68"/>
    </location>
</feature>
<feature type="strand" evidence="2">
    <location>
        <begin position="4"/>
        <end position="13"/>
    </location>
</feature>
<feature type="strand" evidence="2">
    <location>
        <begin position="16"/>
        <end position="34"/>
    </location>
</feature>
<feature type="strand" evidence="2">
    <location>
        <begin position="38"/>
        <end position="43"/>
    </location>
</feature>
<feature type="strand" evidence="2">
    <location>
        <begin position="52"/>
        <end position="55"/>
    </location>
</feature>
<keyword id="KW-0002">3D-structure</keyword>
<keyword id="KW-1185">Reference proteome</keyword>
<keyword id="KW-0687">Ribonucleoprotein</keyword>
<keyword id="KW-0689">Ribosomal protein</keyword>
<proteinExistence type="evidence at protein level"/>